<name>GMHA_ECO55</name>
<protein>
    <recommendedName>
        <fullName evidence="1">Phosphoheptose isomerase</fullName>
        <ecNumber evidence="1">5.3.1.28</ecNumber>
    </recommendedName>
    <alternativeName>
        <fullName evidence="1">Sedoheptulose 7-phosphate isomerase</fullName>
    </alternativeName>
</protein>
<feature type="chain" id="PRO_1000196997" description="Phosphoheptose isomerase">
    <location>
        <begin position="1"/>
        <end position="192"/>
    </location>
</feature>
<feature type="domain" description="SIS" evidence="1">
    <location>
        <begin position="37"/>
        <end position="192"/>
    </location>
</feature>
<feature type="binding site" evidence="1">
    <location>
        <begin position="52"/>
        <end position="54"/>
    </location>
    <ligand>
        <name>substrate</name>
    </ligand>
</feature>
<feature type="binding site" evidence="1">
    <location>
        <position position="61"/>
    </location>
    <ligand>
        <name>Zn(2+)</name>
        <dbReference type="ChEBI" id="CHEBI:29105"/>
    </ligand>
</feature>
<feature type="binding site" evidence="1">
    <location>
        <position position="65"/>
    </location>
    <ligand>
        <name>substrate</name>
    </ligand>
</feature>
<feature type="binding site" evidence="1">
    <location>
        <position position="65"/>
    </location>
    <ligand>
        <name>Zn(2+)</name>
        <dbReference type="ChEBI" id="CHEBI:29105"/>
    </ligand>
</feature>
<feature type="binding site" evidence="1">
    <location>
        <begin position="93"/>
        <end position="94"/>
    </location>
    <ligand>
        <name>substrate</name>
    </ligand>
</feature>
<feature type="binding site" evidence="1">
    <location>
        <begin position="119"/>
        <end position="121"/>
    </location>
    <ligand>
        <name>substrate</name>
    </ligand>
</feature>
<feature type="binding site" evidence="1">
    <location>
        <position position="124"/>
    </location>
    <ligand>
        <name>substrate</name>
    </ligand>
</feature>
<feature type="binding site" evidence="1">
    <location>
        <position position="172"/>
    </location>
    <ligand>
        <name>substrate</name>
    </ligand>
</feature>
<feature type="binding site" evidence="1">
    <location>
        <position position="172"/>
    </location>
    <ligand>
        <name>Zn(2+)</name>
        <dbReference type="ChEBI" id="CHEBI:29105"/>
    </ligand>
</feature>
<feature type="binding site" evidence="1">
    <location>
        <position position="180"/>
    </location>
    <ligand>
        <name>Zn(2+)</name>
        <dbReference type="ChEBI" id="CHEBI:29105"/>
    </ligand>
</feature>
<keyword id="KW-0119">Carbohydrate metabolism</keyword>
<keyword id="KW-0963">Cytoplasm</keyword>
<keyword id="KW-0413">Isomerase</keyword>
<keyword id="KW-0479">Metal-binding</keyword>
<keyword id="KW-1185">Reference proteome</keyword>
<keyword id="KW-0862">Zinc</keyword>
<reference key="1">
    <citation type="journal article" date="2009" name="PLoS Genet.">
        <title>Organised genome dynamics in the Escherichia coli species results in highly diverse adaptive paths.</title>
        <authorList>
            <person name="Touchon M."/>
            <person name="Hoede C."/>
            <person name="Tenaillon O."/>
            <person name="Barbe V."/>
            <person name="Baeriswyl S."/>
            <person name="Bidet P."/>
            <person name="Bingen E."/>
            <person name="Bonacorsi S."/>
            <person name="Bouchier C."/>
            <person name="Bouvet O."/>
            <person name="Calteau A."/>
            <person name="Chiapello H."/>
            <person name="Clermont O."/>
            <person name="Cruveiller S."/>
            <person name="Danchin A."/>
            <person name="Diard M."/>
            <person name="Dossat C."/>
            <person name="Karoui M.E."/>
            <person name="Frapy E."/>
            <person name="Garry L."/>
            <person name="Ghigo J.M."/>
            <person name="Gilles A.M."/>
            <person name="Johnson J."/>
            <person name="Le Bouguenec C."/>
            <person name="Lescat M."/>
            <person name="Mangenot S."/>
            <person name="Martinez-Jehanne V."/>
            <person name="Matic I."/>
            <person name="Nassif X."/>
            <person name="Oztas S."/>
            <person name="Petit M.A."/>
            <person name="Pichon C."/>
            <person name="Rouy Z."/>
            <person name="Ruf C.S."/>
            <person name="Schneider D."/>
            <person name="Tourret J."/>
            <person name="Vacherie B."/>
            <person name="Vallenet D."/>
            <person name="Medigue C."/>
            <person name="Rocha E.P.C."/>
            <person name="Denamur E."/>
        </authorList>
    </citation>
    <scope>NUCLEOTIDE SEQUENCE [LARGE SCALE GENOMIC DNA]</scope>
    <source>
        <strain>55989 / EAEC</strain>
    </source>
</reference>
<comment type="function">
    <text evidence="1">Catalyzes the isomerization of sedoheptulose 7-phosphate in D-glycero-D-manno-heptose 7-phosphate.</text>
</comment>
<comment type="catalytic activity">
    <reaction evidence="1">
        <text>2 D-sedoheptulose 7-phosphate = D-glycero-alpha-D-manno-heptose 7-phosphate + D-glycero-beta-D-manno-heptose 7-phosphate</text>
        <dbReference type="Rhea" id="RHEA:27489"/>
        <dbReference type="ChEBI" id="CHEBI:57483"/>
        <dbReference type="ChEBI" id="CHEBI:60203"/>
        <dbReference type="ChEBI" id="CHEBI:60204"/>
        <dbReference type="EC" id="5.3.1.28"/>
    </reaction>
</comment>
<comment type="cofactor">
    <cofactor evidence="1">
        <name>Zn(2+)</name>
        <dbReference type="ChEBI" id="CHEBI:29105"/>
    </cofactor>
    <text evidence="1">Binds 1 zinc ion per subunit.</text>
</comment>
<comment type="pathway">
    <text evidence="1">Carbohydrate biosynthesis; D-glycero-D-manno-heptose 7-phosphate biosynthesis; D-glycero-alpha-D-manno-heptose 7-phosphate and D-glycero-beta-D-manno-heptose 7-phosphate from sedoheptulose 7-phosphate: step 1/1.</text>
</comment>
<comment type="subunit">
    <text evidence="1">Homotetramer.</text>
</comment>
<comment type="subcellular location">
    <subcellularLocation>
        <location evidence="1">Cytoplasm</location>
    </subcellularLocation>
</comment>
<comment type="miscellaneous">
    <text evidence="1">The reaction produces a racemic mixture of D-glycero-alpha-D-manno-heptose 7-phosphate and D-glycero-beta-D-manno-heptose 7-phosphate.</text>
</comment>
<comment type="similarity">
    <text evidence="1">Belongs to the SIS family. GmhA subfamily.</text>
</comment>
<organism>
    <name type="scientific">Escherichia coli (strain 55989 / EAEC)</name>
    <dbReference type="NCBI Taxonomy" id="585055"/>
    <lineage>
        <taxon>Bacteria</taxon>
        <taxon>Pseudomonadati</taxon>
        <taxon>Pseudomonadota</taxon>
        <taxon>Gammaproteobacteria</taxon>
        <taxon>Enterobacterales</taxon>
        <taxon>Enterobacteriaceae</taxon>
        <taxon>Escherichia</taxon>
    </lineage>
</organism>
<sequence length="192" mass="20815">MYQDLIRNELNEAAETLANFLKDDANIHAIQRAAVLLADSFKAGGKVLSCGNGGSHCDAMHFAEELTGRYRENRPGYPAIAISDVSHISCVGNDFGFNDIFSRYVEAVGREGDVLLGISTSGNSANVIKAIAAAREKGMKVITLTGKDGGKMAGTADIEIRVPHFGYADRIQEIHIKVIHILIQLIEKEMVK</sequence>
<dbReference type="EC" id="5.3.1.28" evidence="1"/>
<dbReference type="EMBL" id="CU928145">
    <property type="protein sequence ID" value="CAU96125.1"/>
    <property type="molecule type" value="Genomic_DNA"/>
</dbReference>
<dbReference type="SMR" id="B7LHF3"/>
<dbReference type="KEGG" id="eck:EC55989_0246"/>
<dbReference type="HOGENOM" id="CLU_080999_4_0_6"/>
<dbReference type="UniPathway" id="UPA00041">
    <property type="reaction ID" value="UER00436"/>
</dbReference>
<dbReference type="Proteomes" id="UP000000746">
    <property type="component" value="Chromosome"/>
</dbReference>
<dbReference type="GO" id="GO:0005737">
    <property type="term" value="C:cytoplasm"/>
    <property type="evidence" value="ECO:0007669"/>
    <property type="project" value="UniProtKB-SubCell"/>
</dbReference>
<dbReference type="GO" id="GO:0097367">
    <property type="term" value="F:carbohydrate derivative binding"/>
    <property type="evidence" value="ECO:0007669"/>
    <property type="project" value="InterPro"/>
</dbReference>
<dbReference type="GO" id="GO:0008968">
    <property type="term" value="F:D-sedoheptulose 7-phosphate isomerase activity"/>
    <property type="evidence" value="ECO:0007669"/>
    <property type="project" value="UniProtKB-UniRule"/>
</dbReference>
<dbReference type="GO" id="GO:0008270">
    <property type="term" value="F:zinc ion binding"/>
    <property type="evidence" value="ECO:0007669"/>
    <property type="project" value="UniProtKB-UniRule"/>
</dbReference>
<dbReference type="GO" id="GO:0005975">
    <property type="term" value="P:carbohydrate metabolic process"/>
    <property type="evidence" value="ECO:0007669"/>
    <property type="project" value="UniProtKB-UniRule"/>
</dbReference>
<dbReference type="GO" id="GO:2001061">
    <property type="term" value="P:D-glycero-D-manno-heptose 7-phosphate biosynthetic process"/>
    <property type="evidence" value="ECO:0007669"/>
    <property type="project" value="UniProtKB-UniPathway"/>
</dbReference>
<dbReference type="CDD" id="cd05006">
    <property type="entry name" value="SIS_GmhA"/>
    <property type="match status" value="1"/>
</dbReference>
<dbReference type="FunFam" id="3.40.50.10490:FF:000013">
    <property type="entry name" value="Phosphoheptose isomerase"/>
    <property type="match status" value="1"/>
</dbReference>
<dbReference type="Gene3D" id="3.40.50.10490">
    <property type="entry name" value="Glucose-6-phosphate isomerase like protein, domain 1"/>
    <property type="match status" value="1"/>
</dbReference>
<dbReference type="HAMAP" id="MF_00067">
    <property type="entry name" value="GmhA"/>
    <property type="match status" value="1"/>
</dbReference>
<dbReference type="InterPro" id="IPR035461">
    <property type="entry name" value="GmhA/DiaA"/>
</dbReference>
<dbReference type="InterPro" id="IPR004515">
    <property type="entry name" value="Phosphoheptose_Isoase"/>
</dbReference>
<dbReference type="InterPro" id="IPR001347">
    <property type="entry name" value="SIS_dom"/>
</dbReference>
<dbReference type="InterPro" id="IPR046348">
    <property type="entry name" value="SIS_dom_sf"/>
</dbReference>
<dbReference type="InterPro" id="IPR050099">
    <property type="entry name" value="SIS_GmhA/DiaA_subfam"/>
</dbReference>
<dbReference type="NCBIfam" id="TIGR00441">
    <property type="entry name" value="gmhA"/>
    <property type="match status" value="1"/>
</dbReference>
<dbReference type="NCBIfam" id="NF001628">
    <property type="entry name" value="PRK00414.1"/>
    <property type="match status" value="1"/>
</dbReference>
<dbReference type="PANTHER" id="PTHR30390:SF7">
    <property type="entry name" value="PHOSPHOHEPTOSE ISOMERASE"/>
    <property type="match status" value="1"/>
</dbReference>
<dbReference type="PANTHER" id="PTHR30390">
    <property type="entry name" value="SEDOHEPTULOSE 7-PHOSPHATE ISOMERASE / DNAA INITIATOR-ASSOCIATING FACTOR FOR REPLICATION INITIATION"/>
    <property type="match status" value="1"/>
</dbReference>
<dbReference type="Pfam" id="PF13580">
    <property type="entry name" value="SIS_2"/>
    <property type="match status" value="1"/>
</dbReference>
<dbReference type="SUPFAM" id="SSF53697">
    <property type="entry name" value="SIS domain"/>
    <property type="match status" value="1"/>
</dbReference>
<dbReference type="PROSITE" id="PS51464">
    <property type="entry name" value="SIS"/>
    <property type="match status" value="1"/>
</dbReference>
<proteinExistence type="inferred from homology"/>
<evidence type="ECO:0000255" key="1">
    <source>
        <dbReference type="HAMAP-Rule" id="MF_00067"/>
    </source>
</evidence>
<accession>B7LHF3</accession>
<gene>
    <name evidence="1" type="primary">gmhA</name>
    <name type="ordered locus">EC55989_0246</name>
</gene>